<reference key="1">
    <citation type="journal article" date="2003" name="Proc. Natl. Acad. Sci. U.S.A.">
        <title>The complete genome sequence of Mycobacterium bovis.</title>
        <authorList>
            <person name="Garnier T."/>
            <person name="Eiglmeier K."/>
            <person name="Camus J.-C."/>
            <person name="Medina N."/>
            <person name="Mansoor H."/>
            <person name="Pryor M."/>
            <person name="Duthoy S."/>
            <person name="Grondin S."/>
            <person name="Lacroix C."/>
            <person name="Monsempe C."/>
            <person name="Simon S."/>
            <person name="Harris B."/>
            <person name="Atkin R."/>
            <person name="Doggett J."/>
            <person name="Mayes R."/>
            <person name="Keating L."/>
            <person name="Wheeler P.R."/>
            <person name="Parkhill J."/>
            <person name="Barrell B.G."/>
            <person name="Cole S.T."/>
            <person name="Gordon S.V."/>
            <person name="Hewinson R.G."/>
        </authorList>
    </citation>
    <scope>NUCLEOTIDE SEQUENCE [LARGE SCALE GENOMIC DNA]</scope>
    <source>
        <strain>ATCC BAA-935 / AF2122/97</strain>
    </source>
</reference>
<reference key="2">
    <citation type="journal article" date="2017" name="Genome Announc.">
        <title>Updated reference genome sequence and annotation of Mycobacterium bovis AF2122/97.</title>
        <authorList>
            <person name="Malone K.M."/>
            <person name="Farrell D."/>
            <person name="Stuber T.P."/>
            <person name="Schubert O.T."/>
            <person name="Aebersold R."/>
            <person name="Robbe-Austerman S."/>
            <person name="Gordon S.V."/>
        </authorList>
    </citation>
    <scope>NUCLEOTIDE SEQUENCE [LARGE SCALE GENOMIC DNA]</scope>
    <scope>GENOME REANNOTATION</scope>
    <source>
        <strain>ATCC BAA-935 / AF2122/97</strain>
    </source>
</reference>
<protein>
    <recommendedName>
        <fullName evidence="1">L-lysine-epsilon aminotransferase</fullName>
        <shortName evidence="1">L-lysine aminotransferase</shortName>
        <shortName evidence="1">LAT</shortName>
        <ecNumber evidence="1">2.6.1.36</ecNumber>
    </recommendedName>
    <alternativeName>
        <fullName evidence="1">Lysine 6-aminotransferase</fullName>
    </alternativeName>
</protein>
<feature type="chain" id="PRO_0000120513" description="L-lysine-epsilon aminotransferase">
    <location>
        <begin position="1"/>
        <end position="449"/>
    </location>
</feature>
<feature type="binding site" evidence="1">
    <location>
        <position position="128"/>
    </location>
    <ligand>
        <name>pyridoxal 5'-phosphate</name>
        <dbReference type="ChEBI" id="CHEBI:597326"/>
    </ligand>
</feature>
<feature type="binding site" evidence="1">
    <location>
        <position position="129"/>
    </location>
    <ligand>
        <name>pyridoxal 5'-phosphate</name>
        <dbReference type="ChEBI" id="CHEBI:597326"/>
    </ligand>
</feature>
<feature type="binding site" evidence="1">
    <location>
        <position position="170"/>
    </location>
    <ligand>
        <name>2-oxoglutarate</name>
        <dbReference type="ChEBI" id="CHEBI:16810"/>
    </ligand>
</feature>
<feature type="binding site" evidence="1">
    <location>
        <position position="170"/>
    </location>
    <ligand>
        <name>L-lysine</name>
        <dbReference type="ChEBI" id="CHEBI:32551"/>
    </ligand>
</feature>
<feature type="binding site" evidence="1">
    <location>
        <position position="274"/>
    </location>
    <ligand>
        <name>2-oxoglutarate</name>
        <dbReference type="ChEBI" id="CHEBI:16810"/>
    </ligand>
</feature>
<feature type="binding site" evidence="1">
    <location>
        <position position="274"/>
    </location>
    <ligand>
        <name>pyridoxal 5'-phosphate</name>
        <dbReference type="ChEBI" id="CHEBI:597326"/>
    </ligand>
</feature>
<feature type="binding site" evidence="1">
    <location>
        <position position="422"/>
    </location>
    <ligand>
        <name>2-oxoglutarate</name>
        <dbReference type="ChEBI" id="CHEBI:16810"/>
    </ligand>
</feature>
<feature type="modified residue" description="N6-(pyridoxal phosphate)lysine" evidence="1">
    <location>
        <position position="300"/>
    </location>
</feature>
<organism>
    <name type="scientific">Mycobacterium bovis (strain ATCC BAA-935 / AF2122/97)</name>
    <dbReference type="NCBI Taxonomy" id="233413"/>
    <lineage>
        <taxon>Bacteria</taxon>
        <taxon>Bacillati</taxon>
        <taxon>Actinomycetota</taxon>
        <taxon>Actinomycetes</taxon>
        <taxon>Mycobacteriales</taxon>
        <taxon>Mycobacteriaceae</taxon>
        <taxon>Mycobacterium</taxon>
        <taxon>Mycobacterium tuberculosis complex</taxon>
    </lineage>
</organism>
<proteinExistence type="inferred from homology"/>
<keyword id="KW-0032">Aminotransferase</keyword>
<keyword id="KW-0663">Pyridoxal phosphate</keyword>
<keyword id="KW-1185">Reference proteome</keyword>
<keyword id="KW-0808">Transferase</keyword>
<gene>
    <name evidence="3" type="primary">lat</name>
    <name evidence="3" type="ordered locus">BQ2027_MB3318C</name>
</gene>
<name>LAT_MYCBO</name>
<sequence length="449" mass="49012">MAAVVKSVALAGRPTTPDRVHEVLGRSMLVDGLDIVLDLTRSGGSYLVDAITGRRYLDMFTFVASSALGMNPPALVDDREFHAELMQAALNKPSNSDVYSVAMARFVETFARVLGDPALPHLFFVEGGALAVENALKAAFDWKSRHNQAHGIDPALGTQVLHLRGAFHGRSGYTLSLTNTKPTITARFPKFDWPRIDAPYMRPGLDEPAMAALEAEALRQARAAFETRPHDIACFVAEPIQGEGGDRHFRPEFFAAMRELCDEFDALLIFDEVQTGCGLTGTAWAYQQLDVAPDIVAFGKKTQVCGVMAGRRVDEVADNVFAVPSRLNSTWGGNLTDMVRARRILEVIEAEGLFERAVQHGKYLRARLDELAADFPAVVLDPRGRGLMCAFSLPTTADRDELIRQLWQRAVIVLPAGADTVRFRPPLTVSTAEIDAAIAAVRSALPVVT</sequence>
<accession>P63510</accession>
<accession>A0A1R3Y3U5</accession>
<accession>P96895</accession>
<accession>X2BNI6</accession>
<dbReference type="EC" id="2.6.1.36" evidence="1"/>
<dbReference type="EMBL" id="LT708304">
    <property type="protein sequence ID" value="SIU01947.1"/>
    <property type="molecule type" value="Genomic_DNA"/>
</dbReference>
<dbReference type="RefSeq" id="NP_856963.1">
    <property type="nucleotide sequence ID" value="NC_002945.3"/>
</dbReference>
<dbReference type="RefSeq" id="WP_003900004.1">
    <property type="nucleotide sequence ID" value="NC_002945.4"/>
</dbReference>
<dbReference type="SMR" id="P63510"/>
<dbReference type="KEGG" id="mbo:BQ2027_MB3318C"/>
<dbReference type="PATRIC" id="fig|233413.5.peg.3647"/>
<dbReference type="Proteomes" id="UP000001419">
    <property type="component" value="Chromosome"/>
</dbReference>
<dbReference type="GO" id="GO:0045484">
    <property type="term" value="F:L-lysine 6-transaminase activity"/>
    <property type="evidence" value="ECO:0007669"/>
    <property type="project" value="UniProtKB-EC"/>
</dbReference>
<dbReference type="GO" id="GO:0030170">
    <property type="term" value="F:pyridoxal phosphate binding"/>
    <property type="evidence" value="ECO:0007669"/>
    <property type="project" value="InterPro"/>
</dbReference>
<dbReference type="GO" id="GO:0017000">
    <property type="term" value="P:antibiotic biosynthetic process"/>
    <property type="evidence" value="ECO:0007669"/>
    <property type="project" value="InterPro"/>
</dbReference>
<dbReference type="GO" id="GO:0009450">
    <property type="term" value="P:gamma-aminobutyric acid catabolic process"/>
    <property type="evidence" value="ECO:0007669"/>
    <property type="project" value="TreeGrafter"/>
</dbReference>
<dbReference type="CDD" id="cd00610">
    <property type="entry name" value="OAT_like"/>
    <property type="match status" value="1"/>
</dbReference>
<dbReference type="FunFam" id="3.40.640.10:FF:000073">
    <property type="entry name" value="Probable 4-aminobutyrate aminotransferase"/>
    <property type="match status" value="1"/>
</dbReference>
<dbReference type="Gene3D" id="3.90.1150.10">
    <property type="entry name" value="Aspartate Aminotransferase, domain 1"/>
    <property type="match status" value="1"/>
</dbReference>
<dbReference type="Gene3D" id="3.40.640.10">
    <property type="entry name" value="Type I PLP-dependent aspartate aminotransferase-like (Major domain)"/>
    <property type="match status" value="1"/>
</dbReference>
<dbReference type="InterPro" id="IPR005814">
    <property type="entry name" value="Aminotrans_3"/>
</dbReference>
<dbReference type="InterPro" id="IPR049704">
    <property type="entry name" value="Aminotrans_3_PPA_site"/>
</dbReference>
<dbReference type="InterPro" id="IPR017657">
    <property type="entry name" value="L-lysine_6-transaminase"/>
</dbReference>
<dbReference type="InterPro" id="IPR015424">
    <property type="entry name" value="PyrdxlP-dep_Trfase"/>
</dbReference>
<dbReference type="InterPro" id="IPR015421">
    <property type="entry name" value="PyrdxlP-dep_Trfase_major"/>
</dbReference>
<dbReference type="InterPro" id="IPR015422">
    <property type="entry name" value="PyrdxlP-dep_Trfase_small"/>
</dbReference>
<dbReference type="NCBIfam" id="TIGR03251">
    <property type="entry name" value="LAT_fam"/>
    <property type="match status" value="1"/>
</dbReference>
<dbReference type="PANTHER" id="PTHR43206:SF2">
    <property type="entry name" value="4-AMINOBUTYRATE AMINOTRANSFERASE GABT"/>
    <property type="match status" value="1"/>
</dbReference>
<dbReference type="PANTHER" id="PTHR43206">
    <property type="entry name" value="AMINOTRANSFERASE"/>
    <property type="match status" value="1"/>
</dbReference>
<dbReference type="Pfam" id="PF00202">
    <property type="entry name" value="Aminotran_3"/>
    <property type="match status" value="1"/>
</dbReference>
<dbReference type="PIRSF" id="PIRSF000521">
    <property type="entry name" value="Transaminase_4ab_Lys_Orn"/>
    <property type="match status" value="1"/>
</dbReference>
<dbReference type="SUPFAM" id="SSF53383">
    <property type="entry name" value="PLP-dependent transferases"/>
    <property type="match status" value="1"/>
</dbReference>
<dbReference type="PROSITE" id="PS00600">
    <property type="entry name" value="AA_TRANSFER_CLASS_3"/>
    <property type="match status" value="1"/>
</dbReference>
<comment type="function">
    <text evidence="1">Catalyzes the transfer of the terminal amino group of L-lysine to alpha-ketoglutarate to yield L-glutamate and 2-aminoadipate 6-semialdehyde ((S)-2-amino-6-oxohexanoate), which is spontaneously converted to the dehydrated form 1-piperideine 6-carboxylate.</text>
</comment>
<comment type="catalytic activity">
    <reaction evidence="1">
        <text>L-lysine + 2-oxoglutarate = (S)-2-amino-6-oxohexanoate + L-glutamate</text>
        <dbReference type="Rhea" id="RHEA:21200"/>
        <dbReference type="ChEBI" id="CHEBI:16810"/>
        <dbReference type="ChEBI" id="CHEBI:29985"/>
        <dbReference type="ChEBI" id="CHEBI:32551"/>
        <dbReference type="ChEBI" id="CHEBI:58321"/>
        <dbReference type="EC" id="2.6.1.36"/>
    </reaction>
</comment>
<comment type="cofactor">
    <cofactor evidence="1">
        <name>pyridoxal 5'-phosphate</name>
        <dbReference type="ChEBI" id="CHEBI:597326"/>
    </cofactor>
</comment>
<comment type="similarity">
    <text evidence="2">Belongs to the class-III pyridoxal-phosphate-dependent aminotransferase family.</text>
</comment>
<evidence type="ECO:0000250" key="1">
    <source>
        <dbReference type="UniProtKB" id="P9WQ77"/>
    </source>
</evidence>
<evidence type="ECO:0000305" key="2"/>
<evidence type="ECO:0000312" key="3">
    <source>
        <dbReference type="EMBL" id="SIU01947.1"/>
    </source>
</evidence>